<reference key="1">
    <citation type="journal article" date="2006" name="Science">
        <title>Genome of rice cluster I archaea -- the key methane producers in the rice rhizosphere.</title>
        <authorList>
            <person name="Erkel C."/>
            <person name="Kube M."/>
            <person name="Reinhardt R."/>
            <person name="Liesack W."/>
        </authorList>
    </citation>
    <scope>NUCLEOTIDE SEQUENCE [LARGE SCALE GENOMIC DNA]</scope>
    <source>
        <strain>DSM 22066 / NBRC 105507 / MRE50</strain>
    </source>
</reference>
<feature type="chain" id="PRO_0000350690" description="Geranylgeranylglyceryl phosphate synthase">
    <location>
        <begin position="1"/>
        <end position="228"/>
    </location>
</feature>
<feature type="binding site" evidence="1">
    <location>
        <position position="14"/>
    </location>
    <ligand>
        <name>sn-glycerol 1-phosphate</name>
        <dbReference type="ChEBI" id="CHEBI:57685"/>
    </ligand>
</feature>
<feature type="binding site" evidence="1">
    <location>
        <position position="16"/>
    </location>
    <ligand>
        <name>Mg(2+)</name>
        <dbReference type="ChEBI" id="CHEBI:18420"/>
    </ligand>
</feature>
<feature type="binding site" evidence="1">
    <location>
        <position position="42"/>
    </location>
    <ligand>
        <name>Mg(2+)</name>
        <dbReference type="ChEBI" id="CHEBI:18420"/>
    </ligand>
</feature>
<feature type="binding site" evidence="1">
    <location>
        <begin position="160"/>
        <end position="165"/>
    </location>
    <ligand>
        <name>sn-glycerol 1-phosphate</name>
        <dbReference type="ChEBI" id="CHEBI:57685"/>
    </ligand>
</feature>
<feature type="binding site" evidence="1">
    <location>
        <position position="190"/>
    </location>
    <ligand>
        <name>sn-glycerol 1-phosphate</name>
        <dbReference type="ChEBI" id="CHEBI:57685"/>
    </ligand>
</feature>
<feature type="binding site" evidence="1">
    <location>
        <begin position="210"/>
        <end position="211"/>
    </location>
    <ligand>
        <name>sn-glycerol 1-phosphate</name>
        <dbReference type="ChEBI" id="CHEBI:57685"/>
    </ligand>
</feature>
<comment type="function">
    <text evidence="1">Prenyltransferase that catalyzes the transfer of the geranylgeranyl moiety of geranylgeranyl diphosphate (GGPP) to the C3 hydroxyl of sn-glycerol-1-phosphate (G1P). This reaction is the first ether-bond-formation step in the biosynthesis of archaeal membrane lipids.</text>
</comment>
<comment type="catalytic activity">
    <reaction evidence="1">
        <text>sn-glycerol 1-phosphate + (2E,6E,10E)-geranylgeranyl diphosphate = sn-3-O-(geranylgeranyl)glycerol 1-phosphate + diphosphate</text>
        <dbReference type="Rhea" id="RHEA:23404"/>
        <dbReference type="ChEBI" id="CHEBI:33019"/>
        <dbReference type="ChEBI" id="CHEBI:57677"/>
        <dbReference type="ChEBI" id="CHEBI:57685"/>
        <dbReference type="ChEBI" id="CHEBI:58756"/>
        <dbReference type="EC" id="2.5.1.41"/>
    </reaction>
</comment>
<comment type="cofactor">
    <cofactor evidence="1">
        <name>Mg(2+)</name>
        <dbReference type="ChEBI" id="CHEBI:18420"/>
    </cofactor>
</comment>
<comment type="pathway">
    <text evidence="1">Membrane lipid metabolism; glycerophospholipid metabolism.</text>
</comment>
<comment type="subcellular location">
    <subcellularLocation>
        <location evidence="1">Cytoplasm</location>
    </subcellularLocation>
</comment>
<comment type="similarity">
    <text evidence="1">Belongs to the GGGP/HepGP synthase family. Group I subfamily.</text>
</comment>
<organism>
    <name type="scientific">Methanocella arvoryzae (strain DSM 22066 / NBRC 105507 / MRE50)</name>
    <dbReference type="NCBI Taxonomy" id="351160"/>
    <lineage>
        <taxon>Archaea</taxon>
        <taxon>Methanobacteriati</taxon>
        <taxon>Methanobacteriota</taxon>
        <taxon>Stenosarchaea group</taxon>
        <taxon>Methanomicrobia</taxon>
        <taxon>Methanocellales</taxon>
        <taxon>Methanocellaceae</taxon>
        <taxon>Methanocella</taxon>
    </lineage>
</organism>
<sequence length="228" mass="25451">MAPIDWKKWRHVTKLDPDKKITRQDIAAIVDSGTDAVMISGTQNITKENVGNMIDMLAEYSIPKVLEPSVSAIIRNDVDFIFVPSIFNTKYSKFAVGYHKDFVKNYPDEVLDKVIPEAYIVLNPLSAVAIVTRAQTGISPREAAAYAELADRFFRFPVVYIEYSGTYGNPELVKAVREKLTNTVLYYGGGIDSREKAETMAKYANTIVVGNAVYKKGGIEKLKETIVK</sequence>
<proteinExistence type="inferred from homology"/>
<accession>Q0W6K5</accession>
<name>GGGPS_METAR</name>
<dbReference type="EC" id="2.5.1.41" evidence="1"/>
<dbReference type="EMBL" id="AM114193">
    <property type="protein sequence ID" value="CAJ35988.1"/>
    <property type="molecule type" value="Genomic_DNA"/>
</dbReference>
<dbReference type="RefSeq" id="WP_012036517.1">
    <property type="nucleotide sequence ID" value="NC_009464.1"/>
</dbReference>
<dbReference type="SMR" id="Q0W6K5"/>
<dbReference type="STRING" id="351160.RCIX581"/>
<dbReference type="GeneID" id="5144231"/>
<dbReference type="KEGG" id="rci:RCIX581"/>
<dbReference type="PATRIC" id="fig|351160.9.peg.2247"/>
<dbReference type="eggNOG" id="arCOG01085">
    <property type="taxonomic scope" value="Archaea"/>
</dbReference>
<dbReference type="OrthoDB" id="49758at2157"/>
<dbReference type="UniPathway" id="UPA00940"/>
<dbReference type="Proteomes" id="UP000000663">
    <property type="component" value="Chromosome"/>
</dbReference>
<dbReference type="GO" id="GO:0005737">
    <property type="term" value="C:cytoplasm"/>
    <property type="evidence" value="ECO:0007669"/>
    <property type="project" value="UniProtKB-SubCell"/>
</dbReference>
<dbReference type="GO" id="GO:0000287">
    <property type="term" value="F:magnesium ion binding"/>
    <property type="evidence" value="ECO:0007669"/>
    <property type="project" value="UniProtKB-UniRule"/>
</dbReference>
<dbReference type="GO" id="GO:0047294">
    <property type="term" value="F:phosphoglycerol geranylgeranyltransferase activity"/>
    <property type="evidence" value="ECO:0007669"/>
    <property type="project" value="UniProtKB-UniRule"/>
</dbReference>
<dbReference type="GO" id="GO:0046474">
    <property type="term" value="P:glycerophospholipid biosynthetic process"/>
    <property type="evidence" value="ECO:0007669"/>
    <property type="project" value="UniProtKB-UniRule"/>
</dbReference>
<dbReference type="CDD" id="cd02812">
    <property type="entry name" value="PcrB_like"/>
    <property type="match status" value="1"/>
</dbReference>
<dbReference type="Gene3D" id="3.20.20.390">
    <property type="entry name" value="FMN-linked oxidoreductases"/>
    <property type="match status" value="1"/>
</dbReference>
<dbReference type="HAMAP" id="MF_00112">
    <property type="entry name" value="GGGP_HepGP_synthase"/>
    <property type="match status" value="1"/>
</dbReference>
<dbReference type="InterPro" id="IPR039074">
    <property type="entry name" value="GGGP/HepGP_synthase_I"/>
</dbReference>
<dbReference type="InterPro" id="IPR038597">
    <property type="entry name" value="GGGP/HepGP_synthase_sf"/>
</dbReference>
<dbReference type="InterPro" id="IPR008205">
    <property type="entry name" value="GGGP_HepGP_synthase"/>
</dbReference>
<dbReference type="InterPro" id="IPR026438">
    <property type="entry name" value="GGGP_synthase_archaea"/>
</dbReference>
<dbReference type="NCBIfam" id="TIGR01768">
    <property type="entry name" value="GGGP-family"/>
    <property type="match status" value="1"/>
</dbReference>
<dbReference type="NCBIfam" id="TIGR04146">
    <property type="entry name" value="GGGPS_Afulg"/>
    <property type="match status" value="1"/>
</dbReference>
<dbReference type="NCBIfam" id="NF003199">
    <property type="entry name" value="PRK04169.1-3"/>
    <property type="match status" value="1"/>
</dbReference>
<dbReference type="PANTHER" id="PTHR40029">
    <property type="match status" value="1"/>
</dbReference>
<dbReference type="PANTHER" id="PTHR40029:SF2">
    <property type="entry name" value="HEPTAPRENYLGLYCERYL PHOSPHATE SYNTHASE"/>
    <property type="match status" value="1"/>
</dbReference>
<dbReference type="Pfam" id="PF01884">
    <property type="entry name" value="PcrB"/>
    <property type="match status" value="1"/>
</dbReference>
<dbReference type="SUPFAM" id="SSF51395">
    <property type="entry name" value="FMN-linked oxidoreductases"/>
    <property type="match status" value="1"/>
</dbReference>
<gene>
    <name type="ordered locus">UNCMA_21970</name>
    <name type="ORF">RCIX581</name>
</gene>
<evidence type="ECO:0000255" key="1">
    <source>
        <dbReference type="HAMAP-Rule" id="MF_00112"/>
    </source>
</evidence>
<keyword id="KW-0963">Cytoplasm</keyword>
<keyword id="KW-0444">Lipid biosynthesis</keyword>
<keyword id="KW-0443">Lipid metabolism</keyword>
<keyword id="KW-0460">Magnesium</keyword>
<keyword id="KW-0479">Metal-binding</keyword>
<keyword id="KW-0594">Phospholipid biosynthesis</keyword>
<keyword id="KW-1208">Phospholipid metabolism</keyword>
<keyword id="KW-1185">Reference proteome</keyword>
<keyword id="KW-0808">Transferase</keyword>
<protein>
    <recommendedName>
        <fullName evidence="1">Geranylgeranylglyceryl phosphate synthase</fullName>
        <shortName evidence="1">GGGP synthase</shortName>
        <shortName evidence="1">GGGPS</shortName>
        <ecNumber evidence="1">2.5.1.41</ecNumber>
    </recommendedName>
    <alternativeName>
        <fullName evidence="1">(S)-3-O-geranylgeranylglyceryl phosphate synthase</fullName>
    </alternativeName>
    <alternativeName>
        <fullName evidence="1">Phosphoglycerol geranylgeranyltransferase</fullName>
    </alternativeName>
</protein>